<gene>
    <name evidence="1" type="primary">speB</name>
    <name type="ordered locus">SbBS512_E3370</name>
</gene>
<name>SPEB_SHIB3</name>
<comment type="function">
    <text evidence="1">Catalyzes the formation of putrescine from agmatine.</text>
</comment>
<comment type="catalytic activity">
    <reaction evidence="1">
        <text>agmatine + H2O = urea + putrescine</text>
        <dbReference type="Rhea" id="RHEA:13929"/>
        <dbReference type="ChEBI" id="CHEBI:15377"/>
        <dbReference type="ChEBI" id="CHEBI:16199"/>
        <dbReference type="ChEBI" id="CHEBI:58145"/>
        <dbReference type="ChEBI" id="CHEBI:326268"/>
        <dbReference type="EC" id="3.5.3.11"/>
    </reaction>
</comment>
<comment type="cofactor">
    <cofactor evidence="1">
        <name>Mn(2+)</name>
        <dbReference type="ChEBI" id="CHEBI:29035"/>
    </cofactor>
</comment>
<comment type="pathway">
    <text evidence="1">Amine and polyamine biosynthesis; putrescine biosynthesis via agmatine pathway; putrescine from agmatine: step 1/1.</text>
</comment>
<comment type="similarity">
    <text evidence="1">Belongs to the arginase family. Agmatinase subfamily.</text>
</comment>
<evidence type="ECO:0000255" key="1">
    <source>
        <dbReference type="HAMAP-Rule" id="MF_01418"/>
    </source>
</evidence>
<sequence length="306" mass="33534">MSTLGNQYDNSLVSNAFGFLRLPMNFQPYDSDADWVITGVPFDMATSGRAGGRHGPAAIRQVSTNLAWEHNRFPWNFDMRERLNVVDCGDLVYAFGDAREMSEKLQAHAEKLLAAGKRMLSFGGDHFVTLPLLRAHAKHFGKMALVHFDAHTDTYANGCEFDHGTMFYTAPKEGLIDPNHSVQIGIRTEFDKDNGFTVLDACQVNDRSVDDVIAQVKQIVGDMPVYLTFDIDCLDPAFAPGTGTPVIGGLTSDRAIKLVRGLKDLNIVGMDVVEVAPAYDQSEITALAAATLALEMLYIQAAKKGE</sequence>
<reference key="1">
    <citation type="submission" date="2008-05" db="EMBL/GenBank/DDBJ databases">
        <title>Complete sequence of Shigella boydii serotype 18 strain BS512.</title>
        <authorList>
            <person name="Rasko D.A."/>
            <person name="Rosovitz M."/>
            <person name="Maurelli A.T."/>
            <person name="Myers G."/>
            <person name="Seshadri R."/>
            <person name="Cer R."/>
            <person name="Jiang L."/>
            <person name="Ravel J."/>
            <person name="Sebastian Y."/>
        </authorList>
    </citation>
    <scope>NUCLEOTIDE SEQUENCE [LARGE SCALE GENOMIC DNA]</scope>
    <source>
        <strain>CDC 3083-94 / BS512</strain>
    </source>
</reference>
<organism>
    <name type="scientific">Shigella boydii serotype 18 (strain CDC 3083-94 / BS512)</name>
    <dbReference type="NCBI Taxonomy" id="344609"/>
    <lineage>
        <taxon>Bacteria</taxon>
        <taxon>Pseudomonadati</taxon>
        <taxon>Pseudomonadota</taxon>
        <taxon>Gammaproteobacteria</taxon>
        <taxon>Enterobacterales</taxon>
        <taxon>Enterobacteriaceae</taxon>
        <taxon>Shigella</taxon>
    </lineage>
</organism>
<dbReference type="EC" id="3.5.3.11" evidence="1"/>
<dbReference type="EMBL" id="CP001063">
    <property type="protein sequence ID" value="ACD06722.1"/>
    <property type="molecule type" value="Genomic_DNA"/>
</dbReference>
<dbReference type="RefSeq" id="WP_000105586.1">
    <property type="nucleotide sequence ID" value="NC_010658.1"/>
</dbReference>
<dbReference type="SMR" id="B2U0V8"/>
<dbReference type="STRING" id="344609.SbBS512_E3370"/>
<dbReference type="KEGG" id="sbc:SbBS512_E3370"/>
<dbReference type="HOGENOM" id="CLU_039478_0_0_6"/>
<dbReference type="UniPathway" id="UPA00534">
    <property type="reaction ID" value="UER00287"/>
</dbReference>
<dbReference type="Proteomes" id="UP000001030">
    <property type="component" value="Chromosome"/>
</dbReference>
<dbReference type="GO" id="GO:0008783">
    <property type="term" value="F:agmatinase activity"/>
    <property type="evidence" value="ECO:0007669"/>
    <property type="project" value="UniProtKB-UniRule"/>
</dbReference>
<dbReference type="GO" id="GO:0030145">
    <property type="term" value="F:manganese ion binding"/>
    <property type="evidence" value="ECO:0007669"/>
    <property type="project" value="InterPro"/>
</dbReference>
<dbReference type="GO" id="GO:0033389">
    <property type="term" value="P:putrescine biosynthetic process from arginine, via agmatine"/>
    <property type="evidence" value="ECO:0007669"/>
    <property type="project" value="TreeGrafter"/>
</dbReference>
<dbReference type="GO" id="GO:0008295">
    <property type="term" value="P:spermidine biosynthetic process"/>
    <property type="evidence" value="ECO:0007669"/>
    <property type="project" value="UniProtKB-UniRule"/>
</dbReference>
<dbReference type="CDD" id="cd11592">
    <property type="entry name" value="Agmatinase_PAH"/>
    <property type="match status" value="1"/>
</dbReference>
<dbReference type="FunFam" id="3.40.800.10:FF:000001">
    <property type="entry name" value="Agmatinase"/>
    <property type="match status" value="1"/>
</dbReference>
<dbReference type="Gene3D" id="3.40.800.10">
    <property type="entry name" value="Ureohydrolase domain"/>
    <property type="match status" value="1"/>
</dbReference>
<dbReference type="HAMAP" id="MF_01418">
    <property type="entry name" value="SpeB"/>
    <property type="match status" value="1"/>
</dbReference>
<dbReference type="InterPro" id="IPR023694">
    <property type="entry name" value="Agmatinase"/>
</dbReference>
<dbReference type="InterPro" id="IPR005925">
    <property type="entry name" value="Agmatinase-rel"/>
</dbReference>
<dbReference type="InterPro" id="IPR006035">
    <property type="entry name" value="Ureohydrolase"/>
</dbReference>
<dbReference type="InterPro" id="IPR023696">
    <property type="entry name" value="Ureohydrolase_dom_sf"/>
</dbReference>
<dbReference type="InterPro" id="IPR020855">
    <property type="entry name" value="Ureohydrolase_Mn_BS"/>
</dbReference>
<dbReference type="NCBIfam" id="TIGR01230">
    <property type="entry name" value="agmatinase"/>
    <property type="match status" value="1"/>
</dbReference>
<dbReference type="NCBIfam" id="NF002564">
    <property type="entry name" value="PRK02190.1"/>
    <property type="match status" value="1"/>
</dbReference>
<dbReference type="PANTHER" id="PTHR11358">
    <property type="entry name" value="ARGINASE/AGMATINASE"/>
    <property type="match status" value="1"/>
</dbReference>
<dbReference type="PANTHER" id="PTHR11358:SF26">
    <property type="entry name" value="GUANIDINO ACID HYDROLASE, MITOCHONDRIAL"/>
    <property type="match status" value="1"/>
</dbReference>
<dbReference type="Pfam" id="PF00491">
    <property type="entry name" value="Arginase"/>
    <property type="match status" value="1"/>
</dbReference>
<dbReference type="PIRSF" id="PIRSF036979">
    <property type="entry name" value="Arginase"/>
    <property type="match status" value="1"/>
</dbReference>
<dbReference type="SUPFAM" id="SSF52768">
    <property type="entry name" value="Arginase/deacetylase"/>
    <property type="match status" value="1"/>
</dbReference>
<dbReference type="PROSITE" id="PS01053">
    <property type="entry name" value="ARGINASE_1"/>
    <property type="match status" value="1"/>
</dbReference>
<dbReference type="PROSITE" id="PS51409">
    <property type="entry name" value="ARGINASE_2"/>
    <property type="match status" value="1"/>
</dbReference>
<accession>B2U0V8</accession>
<keyword id="KW-0378">Hydrolase</keyword>
<keyword id="KW-0464">Manganese</keyword>
<keyword id="KW-0479">Metal-binding</keyword>
<keyword id="KW-0620">Polyamine biosynthesis</keyword>
<keyword id="KW-0661">Putrescine biosynthesis</keyword>
<keyword id="KW-1185">Reference proteome</keyword>
<keyword id="KW-0745">Spermidine biosynthesis</keyword>
<protein>
    <recommendedName>
        <fullName evidence="1">Agmatinase</fullName>
        <ecNumber evidence="1">3.5.3.11</ecNumber>
    </recommendedName>
    <alternativeName>
        <fullName evidence="1">Agmatine ureohydrolase</fullName>
        <shortName evidence="1">AUH</shortName>
    </alternativeName>
</protein>
<proteinExistence type="inferred from homology"/>
<feature type="chain" id="PRO_1000145627" description="Agmatinase">
    <location>
        <begin position="1"/>
        <end position="306"/>
    </location>
</feature>
<feature type="binding site" evidence="1">
    <location>
        <position position="126"/>
    </location>
    <ligand>
        <name>Mn(2+)</name>
        <dbReference type="ChEBI" id="CHEBI:29035"/>
    </ligand>
</feature>
<feature type="binding site" evidence="1">
    <location>
        <position position="149"/>
    </location>
    <ligand>
        <name>Mn(2+)</name>
        <dbReference type="ChEBI" id="CHEBI:29035"/>
    </ligand>
</feature>
<feature type="binding site" evidence="1">
    <location>
        <position position="151"/>
    </location>
    <ligand>
        <name>Mn(2+)</name>
        <dbReference type="ChEBI" id="CHEBI:29035"/>
    </ligand>
</feature>
<feature type="binding site" evidence="1">
    <location>
        <position position="153"/>
    </location>
    <ligand>
        <name>Mn(2+)</name>
        <dbReference type="ChEBI" id="CHEBI:29035"/>
    </ligand>
</feature>
<feature type="binding site" evidence="1">
    <location>
        <position position="230"/>
    </location>
    <ligand>
        <name>Mn(2+)</name>
        <dbReference type="ChEBI" id="CHEBI:29035"/>
    </ligand>
</feature>
<feature type="binding site" evidence="1">
    <location>
        <position position="232"/>
    </location>
    <ligand>
        <name>Mn(2+)</name>
        <dbReference type="ChEBI" id="CHEBI:29035"/>
    </ligand>
</feature>